<reference key="1">
    <citation type="submission" date="2004-10" db="EMBL/GenBank/DDBJ databases">
        <title>Human and mouse cathepsins: partial overlap of function, genome-wide distribution and potential inhibitory peptides.</title>
        <authorList>
            <person name="Xiao K."/>
            <person name="Dandekar T."/>
        </authorList>
    </citation>
    <scope>NUCLEOTIDE SEQUENCE [MRNA]</scope>
</reference>
<organism>
    <name type="scientific">Homo sapiens</name>
    <name type="common">Human</name>
    <dbReference type="NCBI Taxonomy" id="9606"/>
    <lineage>
        <taxon>Eukaryota</taxon>
        <taxon>Metazoa</taxon>
        <taxon>Chordata</taxon>
        <taxon>Craniata</taxon>
        <taxon>Vertebrata</taxon>
        <taxon>Euteleostomi</taxon>
        <taxon>Mammalia</taxon>
        <taxon>Eutheria</taxon>
        <taxon>Euarchontoglires</taxon>
        <taxon>Primates</taxon>
        <taxon>Haplorrhini</taxon>
        <taxon>Catarrhini</taxon>
        <taxon>Hominidae</taxon>
        <taxon>Homo</taxon>
    </lineage>
</organism>
<evidence type="ECO:0000256" key="1">
    <source>
        <dbReference type="SAM" id="MobiDB-lite"/>
    </source>
</evidence>
<evidence type="ECO:0000305" key="2"/>
<sequence length="218" mass="25059">MKMIEQHNQEYREGKHSFTMAMNAFGEMTSEEFRQVVNGFQNQKHRKGKVLQEPLLHDIRKSVDWREKGYVTPVKDQCNWGSVRTDVRKTEKLVSLSVQTWWTALGFKAMLAAFLENHYFASSMLPTMEAWTLRKPFHMKKSSGDWKVQGHRGASGESLLASGESQQSPEVAQYSGKHQVQCHLIEEALQMLSGGDEDHDEDKWPHDMRNHLAGEAQV</sequence>
<gene>
    <name type="primary">CTSL3P</name>
    <name type="synonym">CTSL3</name>
</gene>
<feature type="chain" id="PRO_0000287870" description="Putative inactive cathepsin L-like protein CTSL3P">
    <location>
        <begin position="1"/>
        <end position="218"/>
    </location>
</feature>
<feature type="region of interest" description="Disordered" evidence="1">
    <location>
        <begin position="144"/>
        <end position="173"/>
    </location>
</feature>
<feature type="region of interest" description="Disordered" evidence="1">
    <location>
        <begin position="195"/>
        <end position="218"/>
    </location>
</feature>
<feature type="compositionally biased region" description="Basic and acidic residues" evidence="1">
    <location>
        <begin position="201"/>
        <end position="212"/>
    </location>
</feature>
<feature type="sequence variant" id="VAR_057040" description="In dbSNP:rs11141967.">
    <original>S</original>
    <variation>G</variation>
    <location>
        <position position="123"/>
    </location>
</feature>
<keyword id="KW-1185">Reference proteome</keyword>
<dbReference type="EMBL" id="AJ851862">
    <property type="protein sequence ID" value="CAH65460.1"/>
    <property type="molecule type" value="mRNA"/>
</dbReference>
<dbReference type="SMR" id="Q5NE16"/>
<dbReference type="FunCoup" id="Q5NE16">
    <property type="interactions" value="3"/>
</dbReference>
<dbReference type="IntAct" id="Q5NE16">
    <property type="interactions" value="1"/>
</dbReference>
<dbReference type="MEROPS" id="I29.001"/>
<dbReference type="iPTMnet" id="Q5NE16"/>
<dbReference type="PhosphoSitePlus" id="Q5NE16"/>
<dbReference type="BioMuta" id="HGNC:33132"/>
<dbReference type="DMDM" id="74708101"/>
<dbReference type="jPOST" id="Q5NE16"/>
<dbReference type="MassIVE" id="Q5NE16"/>
<dbReference type="PeptideAtlas" id="Q5NE16"/>
<dbReference type="ProteomicsDB" id="63597"/>
<dbReference type="AGR" id="HGNC:33132"/>
<dbReference type="GeneCards" id="CTSL3P"/>
<dbReference type="HGNC" id="HGNC:33132">
    <property type="gene designation" value="CTSL3P"/>
</dbReference>
<dbReference type="neXtProt" id="NX_Q5NE16"/>
<dbReference type="InParanoid" id="Q5NE16"/>
<dbReference type="PAN-GO" id="Q5NE16">
    <property type="GO annotations" value="4 GO annotations based on evolutionary models"/>
</dbReference>
<dbReference type="PhylomeDB" id="Q5NE16"/>
<dbReference type="PathwayCommons" id="Q5NE16"/>
<dbReference type="SignaLink" id="Q5NE16"/>
<dbReference type="ChiTaRS" id="CTSL3P">
    <property type="organism name" value="human"/>
</dbReference>
<dbReference type="Pharos" id="Q5NE16">
    <property type="development level" value="Tdark"/>
</dbReference>
<dbReference type="Proteomes" id="UP000005640">
    <property type="component" value="Unplaced"/>
</dbReference>
<dbReference type="RNAct" id="Q5NE16">
    <property type="molecule type" value="protein"/>
</dbReference>
<dbReference type="Gene3D" id="3.90.70.10">
    <property type="entry name" value="Cysteine proteinases"/>
    <property type="match status" value="1"/>
</dbReference>
<dbReference type="InterPro" id="IPR038765">
    <property type="entry name" value="Papain-like_cys_pep_sf"/>
</dbReference>
<dbReference type="InterPro" id="IPR013201">
    <property type="entry name" value="Prot_inhib_I29"/>
</dbReference>
<dbReference type="Pfam" id="PF08246">
    <property type="entry name" value="Inhibitor_I29"/>
    <property type="match status" value="1"/>
</dbReference>
<dbReference type="SUPFAM" id="SSF54001">
    <property type="entry name" value="Cysteine proteinases"/>
    <property type="match status" value="1"/>
</dbReference>
<protein>
    <recommendedName>
        <fullName>Putative inactive cathepsin L-like protein CTSL3P</fullName>
    </recommendedName>
    <alternativeName>
        <fullName>Cathepsin L3 pseudogene</fullName>
    </alternativeName>
    <alternativeName>
        <fullName>HCTSL-s</fullName>
    </alternativeName>
</protein>
<accession>Q5NE16</accession>
<comment type="similarity">
    <text evidence="2">Belongs to the peptidase C1 family.</text>
</comment>
<comment type="caution">
    <text evidence="2">Could be the product of a pseudogene. Lacks the region corresponding to the signal sequence and the propeptide. Has mutations in all 3 active site positions.</text>
</comment>
<proteinExistence type="uncertain"/>
<name>CATL3_HUMAN</name>